<evidence type="ECO:0000250" key="1"/>
<evidence type="ECO:0000250" key="2">
    <source>
        <dbReference type="UniProtKB" id="O48814"/>
    </source>
</evidence>
<evidence type="ECO:0000255" key="3"/>
<evidence type="ECO:0000255" key="4">
    <source>
        <dbReference type="PROSITE-ProRule" id="PRU00159"/>
    </source>
</evidence>
<evidence type="ECO:0000255" key="5">
    <source>
        <dbReference type="PROSITE-ProRule" id="PRU10027"/>
    </source>
</evidence>
<evidence type="ECO:0000256" key="6">
    <source>
        <dbReference type="SAM" id="MobiDB-lite"/>
    </source>
</evidence>
<protein>
    <recommendedName>
        <fullName>Putative receptor-like protein kinase At3g46340</fullName>
        <ecNumber>2.7.11.1</ecNumber>
    </recommendedName>
</protein>
<comment type="catalytic activity">
    <reaction>
        <text>L-seryl-[protein] + ATP = O-phospho-L-seryl-[protein] + ADP + H(+)</text>
        <dbReference type="Rhea" id="RHEA:17989"/>
        <dbReference type="Rhea" id="RHEA-COMP:9863"/>
        <dbReference type="Rhea" id="RHEA-COMP:11604"/>
        <dbReference type="ChEBI" id="CHEBI:15378"/>
        <dbReference type="ChEBI" id="CHEBI:29999"/>
        <dbReference type="ChEBI" id="CHEBI:30616"/>
        <dbReference type="ChEBI" id="CHEBI:83421"/>
        <dbReference type="ChEBI" id="CHEBI:456216"/>
        <dbReference type="EC" id="2.7.11.1"/>
    </reaction>
</comment>
<comment type="catalytic activity">
    <reaction>
        <text>L-threonyl-[protein] + ATP = O-phospho-L-threonyl-[protein] + ADP + H(+)</text>
        <dbReference type="Rhea" id="RHEA:46608"/>
        <dbReference type="Rhea" id="RHEA-COMP:11060"/>
        <dbReference type="Rhea" id="RHEA-COMP:11605"/>
        <dbReference type="ChEBI" id="CHEBI:15378"/>
        <dbReference type="ChEBI" id="CHEBI:30013"/>
        <dbReference type="ChEBI" id="CHEBI:30616"/>
        <dbReference type="ChEBI" id="CHEBI:61977"/>
        <dbReference type="ChEBI" id="CHEBI:456216"/>
        <dbReference type="EC" id="2.7.11.1"/>
    </reaction>
</comment>
<comment type="interaction">
    <interactant intactId="EBI-20664802">
        <id>Q9SNA3</id>
    </interactant>
    <interactant intactId="EBI-16934827">
        <id>Q8W4S5</id>
        <label>At5g63710</label>
    </interactant>
    <organismsDiffer>false</organismsDiffer>
    <experiments>3</experiments>
</comment>
<comment type="subcellular location">
    <subcellularLocation>
        <location evidence="1">Cell membrane</location>
        <topology evidence="1">Single-pass type I membrane protein</topology>
    </subcellularLocation>
</comment>
<comment type="similarity">
    <text evidence="4">Belongs to the protein kinase superfamily. Ser/Thr protein kinase family.</text>
</comment>
<sequence>MEFPHSVLLVVLIIATFAISNLVQAEEDQEGFISLDCGLPPNEVSPYIEPFTGLRFSSDSSFIQSGKIGKVDKSFEATTLKSYMTLRYFPDGKRNCYNLIVKQGKTYMIRATALYGNYDGLNISPKFDLYIGANFWTTLDAGEYLSGVVEEVNYIPRSNSLDVCLVKTDTSTPFLSLLELRPLDNDSYLTGSGSLKTFRRYYLSNSESVIAYPEDVKDRIWEPTFDSEWKQIWTTLKPNNSNGYLVPKNVLMTAAIPANDSAPFRFTEELDSPTDELYVYLHFSEVQSLQANESREFDILWSGEVAYEAFIPEYLNITTIQTNTPVTCPGGKCNLELKRTKNSTHPPLINAIEFYTVVNFPQLETNETDVVAIKDIKATYELNRITWQGDPCVPQKFIWEGLDCNSKDALTLPRITSLNLSSTGLTGNIAAGIQNLTHLDKLDLSNNNLTGGVPEFLASMKSLSFINLSKNNLNGSIPQALLKREKDGLKLSVDEQIRCFPGSCVITKKKFPVMIVALVSSAVVVILVVLVLIFVFKKKKPSNLEDLPPSSNTPRENITSTSISDTSIETKRKRFSYSEVMEMTKNLQRPLGEGGFGVVYHGDINGSSQQVAVKLLSQSSTQGYKEFKAEVELLLRVHHINLVSLVGYCDERDHLALIYEYMSNKDLKHHLSGKHGGSVLKWNTRLQIAVDAALGLEYLHIGCRPSMVHRDVKSTNILLDDQFTAKMADFGLSRSFQLGDESQVSTVVAGTPGYLDPEYYRTGRLAEMSDVYSFGIVLLEIITNQRVIDPAREKSHITEWTAFMLNRGDITRIMDPNLQGDYNSRSVWRALELAMMCANPSSEKRPSMSQVVIELKECIRSENKTQGMDSHSSFEQSMSFDTKAVPSAR</sequence>
<proteinExistence type="evidence at protein level"/>
<accession>Q9SNA3</accession>
<keyword id="KW-0067">ATP-binding</keyword>
<keyword id="KW-1003">Cell membrane</keyword>
<keyword id="KW-0325">Glycoprotein</keyword>
<keyword id="KW-0418">Kinase</keyword>
<keyword id="KW-0433">Leucine-rich repeat</keyword>
<keyword id="KW-0472">Membrane</keyword>
<keyword id="KW-0547">Nucleotide-binding</keyword>
<keyword id="KW-0597">Phosphoprotein</keyword>
<keyword id="KW-0675">Receptor</keyword>
<keyword id="KW-1185">Reference proteome</keyword>
<keyword id="KW-0677">Repeat</keyword>
<keyword id="KW-0723">Serine/threonine-protein kinase</keyword>
<keyword id="KW-0732">Signal</keyword>
<keyword id="KW-0808">Transferase</keyword>
<keyword id="KW-0812">Transmembrane</keyword>
<keyword id="KW-1133">Transmembrane helix</keyword>
<dbReference type="EC" id="2.7.11.1"/>
<dbReference type="EMBL" id="AL133298">
    <property type="protein sequence ID" value="CAB62025.1"/>
    <property type="molecule type" value="Genomic_DNA"/>
</dbReference>
<dbReference type="EMBL" id="CP002686">
    <property type="protein sequence ID" value="AEE78148.1"/>
    <property type="molecule type" value="Genomic_DNA"/>
</dbReference>
<dbReference type="PIR" id="T45691">
    <property type="entry name" value="T45691"/>
</dbReference>
<dbReference type="RefSeq" id="NP_190218.1">
    <property type="nucleotide sequence ID" value="NM_114501.2"/>
</dbReference>
<dbReference type="SMR" id="Q9SNA3"/>
<dbReference type="BioGRID" id="9099">
    <property type="interactions" value="22"/>
</dbReference>
<dbReference type="IntAct" id="Q9SNA3">
    <property type="interactions" value="23"/>
</dbReference>
<dbReference type="STRING" id="3702.Q9SNA3"/>
<dbReference type="GlyGen" id="Q9SNA3">
    <property type="glycosylation" value="13 sites"/>
</dbReference>
<dbReference type="iPTMnet" id="Q9SNA3"/>
<dbReference type="PaxDb" id="3702-AT3G46340.1"/>
<dbReference type="ProteomicsDB" id="234608"/>
<dbReference type="EnsemblPlants" id="AT3G46340.1">
    <property type="protein sequence ID" value="AT3G46340.1"/>
    <property type="gene ID" value="AT3G46340"/>
</dbReference>
<dbReference type="GeneID" id="823779"/>
<dbReference type="Gramene" id="AT3G46340.1">
    <property type="protein sequence ID" value="AT3G46340.1"/>
    <property type="gene ID" value="AT3G46340"/>
</dbReference>
<dbReference type="KEGG" id="ath:AT3G46340"/>
<dbReference type="Araport" id="AT3G46340"/>
<dbReference type="TAIR" id="AT3G46340"/>
<dbReference type="eggNOG" id="ENOG502QQCZ">
    <property type="taxonomic scope" value="Eukaryota"/>
</dbReference>
<dbReference type="HOGENOM" id="CLU_000288_41_1_1"/>
<dbReference type="InParanoid" id="Q9SNA3"/>
<dbReference type="OMA" id="PEVSMSC"/>
<dbReference type="PhylomeDB" id="Q9SNA3"/>
<dbReference type="PRO" id="PR:Q9SNA3"/>
<dbReference type="Proteomes" id="UP000006548">
    <property type="component" value="Chromosome 3"/>
</dbReference>
<dbReference type="ExpressionAtlas" id="Q9SNA3">
    <property type="expression patterns" value="baseline and differential"/>
</dbReference>
<dbReference type="GO" id="GO:0005886">
    <property type="term" value="C:plasma membrane"/>
    <property type="evidence" value="ECO:0007669"/>
    <property type="project" value="UniProtKB-SubCell"/>
</dbReference>
<dbReference type="GO" id="GO:0005524">
    <property type="term" value="F:ATP binding"/>
    <property type="evidence" value="ECO:0007669"/>
    <property type="project" value="UniProtKB-KW"/>
</dbReference>
<dbReference type="GO" id="GO:0106310">
    <property type="term" value="F:protein serine kinase activity"/>
    <property type="evidence" value="ECO:0007669"/>
    <property type="project" value="RHEA"/>
</dbReference>
<dbReference type="GO" id="GO:0004674">
    <property type="term" value="F:protein serine/threonine kinase activity"/>
    <property type="evidence" value="ECO:0007669"/>
    <property type="project" value="UniProtKB-KW"/>
</dbReference>
<dbReference type="CDD" id="cd14066">
    <property type="entry name" value="STKc_IRAK"/>
    <property type="match status" value="1"/>
</dbReference>
<dbReference type="FunFam" id="3.80.10.10:FF:000129">
    <property type="entry name" value="Leucine-rich repeat receptor-like kinase"/>
    <property type="match status" value="1"/>
</dbReference>
<dbReference type="FunFam" id="3.30.200.20:FF:000394">
    <property type="entry name" value="Leucine-rich repeat receptor-like protein kinase"/>
    <property type="match status" value="1"/>
</dbReference>
<dbReference type="FunFam" id="1.10.510.10:FF:000146">
    <property type="entry name" value="LRR receptor-like serine/threonine-protein kinase IOS1"/>
    <property type="match status" value="1"/>
</dbReference>
<dbReference type="Gene3D" id="3.30.200.20">
    <property type="entry name" value="Phosphorylase Kinase, domain 1"/>
    <property type="match status" value="1"/>
</dbReference>
<dbReference type="Gene3D" id="3.80.10.10">
    <property type="entry name" value="Ribonuclease Inhibitor"/>
    <property type="match status" value="1"/>
</dbReference>
<dbReference type="Gene3D" id="1.10.510.10">
    <property type="entry name" value="Transferase(Phosphotransferase) domain 1"/>
    <property type="match status" value="1"/>
</dbReference>
<dbReference type="InterPro" id="IPR011009">
    <property type="entry name" value="Kinase-like_dom_sf"/>
</dbReference>
<dbReference type="InterPro" id="IPR001611">
    <property type="entry name" value="Leu-rich_rpt"/>
</dbReference>
<dbReference type="InterPro" id="IPR032675">
    <property type="entry name" value="LRR_dom_sf"/>
</dbReference>
<dbReference type="InterPro" id="IPR024788">
    <property type="entry name" value="Malectin-like_Carb-bd_dom"/>
</dbReference>
<dbReference type="InterPro" id="IPR000719">
    <property type="entry name" value="Prot_kinase_dom"/>
</dbReference>
<dbReference type="InterPro" id="IPR017441">
    <property type="entry name" value="Protein_kinase_ATP_BS"/>
</dbReference>
<dbReference type="InterPro" id="IPR001245">
    <property type="entry name" value="Ser-Thr/Tyr_kinase_cat_dom"/>
</dbReference>
<dbReference type="InterPro" id="IPR008271">
    <property type="entry name" value="Ser/Thr_kinase_AS"/>
</dbReference>
<dbReference type="PANTHER" id="PTHR45631:SF69">
    <property type="entry name" value="LEUCINE-RICH REPEAT PROTEIN KINASE FAMILY PROTEIN"/>
    <property type="match status" value="1"/>
</dbReference>
<dbReference type="PANTHER" id="PTHR45631">
    <property type="entry name" value="OS07G0107800 PROTEIN-RELATED"/>
    <property type="match status" value="1"/>
</dbReference>
<dbReference type="Pfam" id="PF13855">
    <property type="entry name" value="LRR_8"/>
    <property type="match status" value="1"/>
</dbReference>
<dbReference type="Pfam" id="PF12819">
    <property type="entry name" value="Malectin_like"/>
    <property type="match status" value="1"/>
</dbReference>
<dbReference type="Pfam" id="PF07714">
    <property type="entry name" value="PK_Tyr_Ser-Thr"/>
    <property type="match status" value="1"/>
</dbReference>
<dbReference type="SMART" id="SM00220">
    <property type="entry name" value="S_TKc"/>
    <property type="match status" value="1"/>
</dbReference>
<dbReference type="SUPFAM" id="SSF52058">
    <property type="entry name" value="L domain-like"/>
    <property type="match status" value="1"/>
</dbReference>
<dbReference type="SUPFAM" id="SSF56112">
    <property type="entry name" value="Protein kinase-like (PK-like)"/>
    <property type="match status" value="1"/>
</dbReference>
<dbReference type="PROSITE" id="PS00107">
    <property type="entry name" value="PROTEIN_KINASE_ATP"/>
    <property type="match status" value="1"/>
</dbReference>
<dbReference type="PROSITE" id="PS50011">
    <property type="entry name" value="PROTEIN_KINASE_DOM"/>
    <property type="match status" value="1"/>
</dbReference>
<dbReference type="PROSITE" id="PS00108">
    <property type="entry name" value="PROTEIN_KINASE_ST"/>
    <property type="match status" value="1"/>
</dbReference>
<name>Y3463_ARATH</name>
<organism>
    <name type="scientific">Arabidopsis thaliana</name>
    <name type="common">Mouse-ear cress</name>
    <dbReference type="NCBI Taxonomy" id="3702"/>
    <lineage>
        <taxon>Eukaryota</taxon>
        <taxon>Viridiplantae</taxon>
        <taxon>Streptophyta</taxon>
        <taxon>Embryophyta</taxon>
        <taxon>Tracheophyta</taxon>
        <taxon>Spermatophyta</taxon>
        <taxon>Magnoliopsida</taxon>
        <taxon>eudicotyledons</taxon>
        <taxon>Gunneridae</taxon>
        <taxon>Pentapetalae</taxon>
        <taxon>rosids</taxon>
        <taxon>malvids</taxon>
        <taxon>Brassicales</taxon>
        <taxon>Brassicaceae</taxon>
        <taxon>Camelineae</taxon>
        <taxon>Arabidopsis</taxon>
    </lineage>
</organism>
<gene>
    <name type="ordered locus">At3g46340</name>
    <name type="ORF">F18L15.60</name>
</gene>
<reference key="1">
    <citation type="journal article" date="2000" name="Nature">
        <title>Sequence and analysis of chromosome 3 of the plant Arabidopsis thaliana.</title>
        <authorList>
            <person name="Salanoubat M."/>
            <person name="Lemcke K."/>
            <person name="Rieger M."/>
            <person name="Ansorge W."/>
            <person name="Unseld M."/>
            <person name="Fartmann B."/>
            <person name="Valle G."/>
            <person name="Bloecker H."/>
            <person name="Perez-Alonso M."/>
            <person name="Obermaier B."/>
            <person name="Delseny M."/>
            <person name="Boutry M."/>
            <person name="Grivell L.A."/>
            <person name="Mache R."/>
            <person name="Puigdomenech P."/>
            <person name="De Simone V."/>
            <person name="Choisne N."/>
            <person name="Artiguenave F."/>
            <person name="Robert C."/>
            <person name="Brottier P."/>
            <person name="Wincker P."/>
            <person name="Cattolico L."/>
            <person name="Weissenbach J."/>
            <person name="Saurin W."/>
            <person name="Quetier F."/>
            <person name="Schaefer M."/>
            <person name="Mueller-Auer S."/>
            <person name="Gabel C."/>
            <person name="Fuchs M."/>
            <person name="Benes V."/>
            <person name="Wurmbach E."/>
            <person name="Drzonek H."/>
            <person name="Erfle H."/>
            <person name="Jordan N."/>
            <person name="Bangert S."/>
            <person name="Wiedelmann R."/>
            <person name="Kranz H."/>
            <person name="Voss H."/>
            <person name="Holland R."/>
            <person name="Brandt P."/>
            <person name="Nyakatura G."/>
            <person name="Vezzi A."/>
            <person name="D'Angelo M."/>
            <person name="Pallavicini A."/>
            <person name="Toppo S."/>
            <person name="Simionati B."/>
            <person name="Conrad A."/>
            <person name="Hornischer K."/>
            <person name="Kauer G."/>
            <person name="Loehnert T.-H."/>
            <person name="Nordsiek G."/>
            <person name="Reichelt J."/>
            <person name="Scharfe M."/>
            <person name="Schoen O."/>
            <person name="Bargues M."/>
            <person name="Terol J."/>
            <person name="Climent J."/>
            <person name="Navarro P."/>
            <person name="Collado C."/>
            <person name="Perez-Perez A."/>
            <person name="Ottenwaelder B."/>
            <person name="Duchemin D."/>
            <person name="Cooke R."/>
            <person name="Laudie M."/>
            <person name="Berger-Llauro C."/>
            <person name="Purnelle B."/>
            <person name="Masuy D."/>
            <person name="de Haan M."/>
            <person name="Maarse A.C."/>
            <person name="Alcaraz J.-P."/>
            <person name="Cottet A."/>
            <person name="Casacuberta E."/>
            <person name="Monfort A."/>
            <person name="Argiriou A."/>
            <person name="Flores M."/>
            <person name="Liguori R."/>
            <person name="Vitale D."/>
            <person name="Mannhaupt G."/>
            <person name="Haase D."/>
            <person name="Schoof H."/>
            <person name="Rudd S."/>
            <person name="Zaccaria P."/>
            <person name="Mewes H.-W."/>
            <person name="Mayer K.F.X."/>
            <person name="Kaul S."/>
            <person name="Town C.D."/>
            <person name="Koo H.L."/>
            <person name="Tallon L.J."/>
            <person name="Jenkins J."/>
            <person name="Rooney T."/>
            <person name="Rizzo M."/>
            <person name="Walts A."/>
            <person name="Utterback T."/>
            <person name="Fujii C.Y."/>
            <person name="Shea T.P."/>
            <person name="Creasy T.H."/>
            <person name="Haas B."/>
            <person name="Maiti R."/>
            <person name="Wu D."/>
            <person name="Peterson J."/>
            <person name="Van Aken S."/>
            <person name="Pai G."/>
            <person name="Militscher J."/>
            <person name="Sellers P."/>
            <person name="Gill J.E."/>
            <person name="Feldblyum T.V."/>
            <person name="Preuss D."/>
            <person name="Lin X."/>
            <person name="Nierman W.C."/>
            <person name="Salzberg S.L."/>
            <person name="White O."/>
            <person name="Venter J.C."/>
            <person name="Fraser C.M."/>
            <person name="Kaneko T."/>
            <person name="Nakamura Y."/>
            <person name="Sato S."/>
            <person name="Kato T."/>
            <person name="Asamizu E."/>
            <person name="Sasamoto S."/>
            <person name="Kimura T."/>
            <person name="Idesawa K."/>
            <person name="Kawashima K."/>
            <person name="Kishida Y."/>
            <person name="Kiyokawa C."/>
            <person name="Kohara M."/>
            <person name="Matsumoto M."/>
            <person name="Matsuno A."/>
            <person name="Muraki A."/>
            <person name="Nakayama S."/>
            <person name="Nakazaki N."/>
            <person name="Shinpo S."/>
            <person name="Takeuchi C."/>
            <person name="Wada T."/>
            <person name="Watanabe A."/>
            <person name="Yamada M."/>
            <person name="Yasuda M."/>
            <person name="Tabata S."/>
        </authorList>
    </citation>
    <scope>NUCLEOTIDE SEQUENCE [LARGE SCALE GENOMIC DNA]</scope>
    <source>
        <strain>cv. Columbia</strain>
    </source>
</reference>
<reference key="2">
    <citation type="journal article" date="2017" name="Plant J.">
        <title>Araport11: a complete reannotation of the Arabidopsis thaliana reference genome.</title>
        <authorList>
            <person name="Cheng C.Y."/>
            <person name="Krishnakumar V."/>
            <person name="Chan A.P."/>
            <person name="Thibaud-Nissen F."/>
            <person name="Schobel S."/>
            <person name="Town C.D."/>
        </authorList>
    </citation>
    <scope>GENOME REANNOTATION</scope>
    <source>
        <strain>cv. Columbia</strain>
    </source>
</reference>
<feature type="signal peptide" evidence="3">
    <location>
        <begin position="1"/>
        <end position="25"/>
    </location>
</feature>
<feature type="chain" id="PRO_0000401357" description="Putative receptor-like protein kinase At3g46340">
    <location>
        <begin position="26"/>
        <end position="889"/>
    </location>
</feature>
<feature type="topological domain" description="Extracellular" evidence="3">
    <location>
        <begin position="26"/>
        <end position="514"/>
    </location>
</feature>
<feature type="transmembrane region" description="Helical" evidence="3">
    <location>
        <begin position="515"/>
        <end position="535"/>
    </location>
</feature>
<feature type="topological domain" description="Cytoplasmic" evidence="3">
    <location>
        <begin position="536"/>
        <end position="889"/>
    </location>
</feature>
<feature type="repeat" description="LRR 1">
    <location>
        <begin position="414"/>
        <end position="437"/>
    </location>
</feature>
<feature type="repeat" description="LRR 2">
    <location>
        <begin position="438"/>
        <end position="460"/>
    </location>
</feature>
<feature type="repeat" description="LRR 3">
    <location>
        <begin position="462"/>
        <end position="483"/>
    </location>
</feature>
<feature type="domain" description="Protein kinase" evidence="4">
    <location>
        <begin position="585"/>
        <end position="874"/>
    </location>
</feature>
<feature type="region of interest" description="Disordered" evidence="6">
    <location>
        <begin position="544"/>
        <end position="566"/>
    </location>
</feature>
<feature type="region of interest" description="Disordered" evidence="6">
    <location>
        <begin position="863"/>
        <end position="889"/>
    </location>
</feature>
<feature type="compositionally biased region" description="Polar residues" evidence="6">
    <location>
        <begin position="864"/>
        <end position="880"/>
    </location>
</feature>
<feature type="active site" description="Proton acceptor" evidence="4 5">
    <location>
        <position position="711"/>
    </location>
</feature>
<feature type="binding site" evidence="4">
    <location>
        <begin position="591"/>
        <end position="599"/>
    </location>
    <ligand>
        <name>ATP</name>
        <dbReference type="ChEBI" id="CHEBI:30616"/>
    </ligand>
</feature>
<feature type="binding site" evidence="4">
    <location>
        <position position="614"/>
    </location>
    <ligand>
        <name>ATP</name>
        <dbReference type="ChEBI" id="CHEBI:30616"/>
    </ligand>
</feature>
<feature type="modified residue" description="Phosphotyrosine" evidence="2">
    <location>
        <position position="659"/>
    </location>
</feature>
<feature type="modified residue" description="Phosphoserine" evidence="2">
    <location>
        <position position="745"/>
    </location>
</feature>
<feature type="modified residue" description="Phosphothreonine" evidence="2">
    <location>
        <position position="746"/>
    </location>
</feature>
<feature type="modified residue" description="Phosphothreonine" evidence="2">
    <location>
        <position position="751"/>
    </location>
</feature>
<feature type="modified residue" description="Phosphotyrosine" evidence="2">
    <location>
        <position position="759"/>
    </location>
</feature>
<feature type="glycosylation site" description="N-linked (GlcNAc...) asparagine" evidence="3">
    <location>
        <position position="185"/>
    </location>
</feature>
<feature type="glycosylation site" description="N-linked (GlcNAc...) asparagine" evidence="3">
    <location>
        <position position="239"/>
    </location>
</feature>
<feature type="glycosylation site" description="N-linked (GlcNAc...) asparagine" evidence="3">
    <location>
        <position position="259"/>
    </location>
</feature>
<feature type="glycosylation site" description="N-linked (GlcNAc...) asparagine" evidence="3">
    <location>
        <position position="292"/>
    </location>
</feature>
<feature type="glycosylation site" description="N-linked (GlcNAc...) asparagine" evidence="3">
    <location>
        <position position="316"/>
    </location>
</feature>
<feature type="glycosylation site" description="N-linked (GlcNAc...) asparagine" evidence="3">
    <location>
        <position position="342"/>
    </location>
</feature>
<feature type="glycosylation site" description="N-linked (GlcNAc...) asparagine" evidence="3">
    <location>
        <position position="366"/>
    </location>
</feature>
<feature type="glycosylation site" description="N-linked (GlcNAc...) asparagine" evidence="3">
    <location>
        <position position="419"/>
    </location>
</feature>
<feature type="glycosylation site" description="N-linked (GlcNAc...) asparagine" evidence="3">
    <location>
        <position position="435"/>
    </location>
</feature>
<feature type="glycosylation site" description="N-linked (GlcNAc...) asparagine" evidence="3">
    <location>
        <position position="448"/>
    </location>
</feature>
<feature type="glycosylation site" description="N-linked (GlcNAc...) asparagine" evidence="3">
    <location>
        <position position="467"/>
    </location>
</feature>
<feature type="glycosylation site" description="N-linked (GlcNAc...) asparagine" evidence="3">
    <location>
        <position position="474"/>
    </location>
</feature>